<name>DXR_MENPI</name>
<feature type="transit peptide" description="Chloroplast" evidence="3">
    <location>
        <begin position="1"/>
        <end status="unknown"/>
    </location>
</feature>
<feature type="chain" id="PRO_0000007396" description="1-deoxy-D-xylulose 5-phosphate reductoisomerase, chloroplastic">
    <location>
        <begin status="unknown"/>
        <end position="470"/>
    </location>
</feature>
<feature type="binding site" evidence="1">
    <location>
        <position position="83"/>
    </location>
    <ligand>
        <name>NADPH</name>
        <dbReference type="ChEBI" id="CHEBI:57783"/>
    </ligand>
</feature>
<feature type="binding site" evidence="1">
    <location>
        <position position="84"/>
    </location>
    <ligand>
        <name>NADPH</name>
        <dbReference type="ChEBI" id="CHEBI:57783"/>
    </ligand>
</feature>
<feature type="binding site" evidence="1">
    <location>
        <position position="85"/>
    </location>
    <ligand>
        <name>NADPH</name>
        <dbReference type="ChEBI" id="CHEBI:57783"/>
    </ligand>
</feature>
<feature type="binding site" evidence="1">
    <location>
        <position position="86"/>
    </location>
    <ligand>
        <name>NADPH</name>
        <dbReference type="ChEBI" id="CHEBI:57783"/>
    </ligand>
</feature>
<feature type="binding site" evidence="1">
    <location>
        <position position="109"/>
    </location>
    <ligand>
        <name>NADPH</name>
        <dbReference type="ChEBI" id="CHEBI:57783"/>
    </ligand>
</feature>
<feature type="binding site" evidence="1">
    <location>
        <position position="111"/>
    </location>
    <ligand>
        <name>NADPH</name>
        <dbReference type="ChEBI" id="CHEBI:57783"/>
    </ligand>
</feature>
<feature type="binding site" evidence="1">
    <location>
        <position position="197"/>
    </location>
    <ligand>
        <name>NADPH</name>
        <dbReference type="ChEBI" id="CHEBI:57783"/>
    </ligand>
</feature>
<feature type="binding site" evidence="1">
    <location>
        <position position="198"/>
    </location>
    <ligand>
        <name>1-deoxy-D-xylulose 5-phosphate</name>
        <dbReference type="ChEBI" id="CHEBI:57792"/>
    </ligand>
</feature>
<feature type="binding site" evidence="1">
    <location>
        <position position="199"/>
    </location>
    <ligand>
        <name>NADPH</name>
        <dbReference type="ChEBI" id="CHEBI:57783"/>
    </ligand>
</feature>
<feature type="binding site" evidence="1">
    <location>
        <position position="223"/>
    </location>
    <ligand>
        <name>Mn(2+)</name>
        <dbReference type="ChEBI" id="CHEBI:29035"/>
    </ligand>
</feature>
<feature type="binding site" evidence="1">
    <location>
        <position position="224"/>
    </location>
    <ligand>
        <name>1-deoxy-D-xylulose 5-phosphate</name>
        <dbReference type="ChEBI" id="CHEBI:57792"/>
    </ligand>
</feature>
<feature type="binding site" evidence="1">
    <location>
        <position position="225"/>
    </location>
    <ligand>
        <name>1-deoxy-D-xylulose 5-phosphate</name>
        <dbReference type="ChEBI" id="CHEBI:57792"/>
    </ligand>
</feature>
<feature type="binding site" evidence="1">
    <location>
        <position position="225"/>
    </location>
    <ligand>
        <name>Mn(2+)</name>
        <dbReference type="ChEBI" id="CHEBI:29035"/>
    </ligand>
</feature>
<feature type="binding site" evidence="1">
    <location>
        <position position="249"/>
    </location>
    <ligand>
        <name>1-deoxy-D-xylulose 5-phosphate</name>
        <dbReference type="ChEBI" id="CHEBI:57792"/>
    </ligand>
</feature>
<feature type="binding site" evidence="1">
    <location>
        <position position="272"/>
    </location>
    <ligand>
        <name>1-deoxy-D-xylulose 5-phosphate</name>
        <dbReference type="ChEBI" id="CHEBI:57792"/>
    </ligand>
</feature>
<feature type="binding site" evidence="1">
    <location>
        <position position="278"/>
    </location>
    <ligand>
        <name>NADPH</name>
        <dbReference type="ChEBI" id="CHEBI:57783"/>
    </ligand>
</feature>
<feature type="binding site" evidence="1">
    <location>
        <position position="285"/>
    </location>
    <ligand>
        <name>1-deoxy-D-xylulose 5-phosphate</name>
        <dbReference type="ChEBI" id="CHEBI:57792"/>
    </ligand>
</feature>
<feature type="binding site" evidence="1">
    <location>
        <position position="290"/>
    </location>
    <ligand>
        <name>1-deoxy-D-xylulose 5-phosphate</name>
        <dbReference type="ChEBI" id="CHEBI:57792"/>
    </ligand>
</feature>
<feature type="binding site" evidence="1">
    <location>
        <position position="291"/>
    </location>
    <ligand>
        <name>1-deoxy-D-xylulose 5-phosphate</name>
        <dbReference type="ChEBI" id="CHEBI:57792"/>
    </ligand>
</feature>
<feature type="binding site" evidence="1">
    <location>
        <position position="294"/>
    </location>
    <ligand>
        <name>1-deoxy-D-xylulose 5-phosphate</name>
        <dbReference type="ChEBI" id="CHEBI:57792"/>
    </ligand>
</feature>
<feature type="binding site" evidence="1">
    <location>
        <position position="294"/>
    </location>
    <ligand>
        <name>Mn(2+)</name>
        <dbReference type="ChEBI" id="CHEBI:29035"/>
    </ligand>
</feature>
<keyword id="KW-0150">Chloroplast</keyword>
<keyword id="KW-0414">Isoprene biosynthesis</keyword>
<keyword id="KW-0464">Manganese</keyword>
<keyword id="KW-0479">Metal-binding</keyword>
<keyword id="KW-0521">NADP</keyword>
<keyword id="KW-0560">Oxidoreductase</keyword>
<keyword id="KW-0934">Plastid</keyword>
<keyword id="KW-0809">Transit peptide</keyword>
<organism>
    <name type="scientific">Mentha piperita</name>
    <name type="common">Peppermint</name>
    <name type="synonym">Mentha aquatica x Mentha spicata</name>
    <dbReference type="NCBI Taxonomy" id="34256"/>
    <lineage>
        <taxon>Eukaryota</taxon>
        <taxon>Viridiplantae</taxon>
        <taxon>Streptophyta</taxon>
        <taxon>Embryophyta</taxon>
        <taxon>Tracheophyta</taxon>
        <taxon>Spermatophyta</taxon>
        <taxon>Magnoliopsida</taxon>
        <taxon>eudicotyledons</taxon>
        <taxon>Gunneridae</taxon>
        <taxon>Pentapetalae</taxon>
        <taxon>asterids</taxon>
        <taxon>lamiids</taxon>
        <taxon>Lamiales</taxon>
        <taxon>Lamiaceae</taxon>
        <taxon>Nepetoideae</taxon>
        <taxon>Mentheae</taxon>
        <taxon>Menthinae</taxon>
        <taxon>Mentha</taxon>
    </lineage>
</organism>
<accession>Q9XES0</accession>
<reference key="1">
    <citation type="journal article" date="1999" name="Arch. Biochem. Biophys.">
        <title>Isoprenoid biosynthesis via a mevalonate-independent pathway in plants: cloning and heterologous expression of 1-deoxy-D-xylulose-5-phosphate reductoisomerase from peppermint.</title>
        <authorList>
            <person name="Lange B.M."/>
            <person name="Croteau R."/>
        </authorList>
    </citation>
    <scope>NUCLEOTIDE SEQUENCE [MRNA]</scope>
    <source>
        <tissue>Oil gland</tissue>
    </source>
</reference>
<reference key="2">
    <citation type="submission" date="2005-10" db="EMBL/GenBank/DDBJ databases">
        <authorList>
            <person name="Lange B.M."/>
            <person name="Croteau R."/>
        </authorList>
    </citation>
    <scope>SEQUENCE REVISION</scope>
</reference>
<evidence type="ECO:0000250" key="1">
    <source>
        <dbReference type="UniProtKB" id="P45568"/>
    </source>
</evidence>
<evidence type="ECO:0000250" key="2">
    <source>
        <dbReference type="UniProtKB" id="Q9XFS9"/>
    </source>
</evidence>
<evidence type="ECO:0000255" key="3"/>
<evidence type="ECO:0000305" key="4"/>
<comment type="function">
    <text evidence="1">Catalyzes the NADPH-dependent rearrangement and reduction of 1-deoxy-D-xylulose-5-phosphate (DXP) to 2-C-methyl-D-erythritol 4-phosphate (MEP).</text>
</comment>
<comment type="catalytic activity">
    <reaction evidence="1">
        <text>2-C-methyl-D-erythritol 4-phosphate + NADP(+) = 1-deoxy-D-xylulose 5-phosphate + NADPH + H(+)</text>
        <dbReference type="Rhea" id="RHEA:13717"/>
        <dbReference type="ChEBI" id="CHEBI:15378"/>
        <dbReference type="ChEBI" id="CHEBI:57783"/>
        <dbReference type="ChEBI" id="CHEBI:57792"/>
        <dbReference type="ChEBI" id="CHEBI:58262"/>
        <dbReference type="ChEBI" id="CHEBI:58349"/>
        <dbReference type="EC" id="1.1.1.267"/>
    </reaction>
    <physiologicalReaction direction="right-to-left" evidence="1">
        <dbReference type="Rhea" id="RHEA:13719"/>
    </physiologicalReaction>
</comment>
<comment type="cofactor">
    <cofactor evidence="1">
        <name>Mn(2+)</name>
        <dbReference type="ChEBI" id="CHEBI:29035"/>
    </cofactor>
    <cofactor evidence="1">
        <name>Mg(2+)</name>
        <dbReference type="ChEBI" id="CHEBI:18420"/>
    </cofactor>
</comment>
<comment type="pathway">
    <text evidence="2">Isoprenoid biosynthesis; isopentenyl diphosphate biosynthesis via DXP pathway; isopentenyl diphosphate from 1-deoxy-D-xylulose 5-phosphate: step 1/6.</text>
</comment>
<comment type="subcellular location">
    <subcellularLocation>
        <location>Plastid</location>
        <location>Chloroplast</location>
    </subcellularLocation>
</comment>
<comment type="similarity">
    <text evidence="4">Belongs to the DXR family.</text>
</comment>
<dbReference type="EC" id="1.1.1.267" evidence="1"/>
<dbReference type="EMBL" id="AF116825">
    <property type="protein sequence ID" value="AAD24768.2"/>
    <property type="molecule type" value="mRNA"/>
</dbReference>
<dbReference type="SMR" id="Q9XES0"/>
<dbReference type="UniPathway" id="UPA00056">
    <property type="reaction ID" value="UER00092"/>
</dbReference>
<dbReference type="GO" id="GO:0009507">
    <property type="term" value="C:chloroplast"/>
    <property type="evidence" value="ECO:0007669"/>
    <property type="project" value="UniProtKB-SubCell"/>
</dbReference>
<dbReference type="GO" id="GO:0030604">
    <property type="term" value="F:1-deoxy-D-xylulose-5-phosphate reductoisomerase activity"/>
    <property type="evidence" value="ECO:0007669"/>
    <property type="project" value="UniProtKB-EC"/>
</dbReference>
<dbReference type="GO" id="GO:0030145">
    <property type="term" value="F:manganese ion binding"/>
    <property type="evidence" value="ECO:0007669"/>
    <property type="project" value="TreeGrafter"/>
</dbReference>
<dbReference type="GO" id="GO:0070402">
    <property type="term" value="F:NADPH binding"/>
    <property type="evidence" value="ECO:0007669"/>
    <property type="project" value="InterPro"/>
</dbReference>
<dbReference type="GO" id="GO:0051484">
    <property type="term" value="P:isopentenyl diphosphate biosynthetic process, methylerythritol 4-phosphate pathway involved in terpenoid biosynthetic process"/>
    <property type="evidence" value="ECO:0007669"/>
    <property type="project" value="TreeGrafter"/>
</dbReference>
<dbReference type="FunFam" id="1.10.1740.10:FF:000006">
    <property type="entry name" value="1-deoxy-D-xylulose 5-phosphate reductoisomerase, chloroplastic"/>
    <property type="match status" value="1"/>
</dbReference>
<dbReference type="FunFam" id="3.40.50.720:FF:000183">
    <property type="entry name" value="1-deoxy-D-xylulose 5-phosphate reductoisomerase, chloroplastic"/>
    <property type="match status" value="1"/>
</dbReference>
<dbReference type="Gene3D" id="1.10.1740.10">
    <property type="match status" value="1"/>
</dbReference>
<dbReference type="Gene3D" id="3.40.50.720">
    <property type="entry name" value="NAD(P)-binding Rossmann-like Domain"/>
    <property type="match status" value="1"/>
</dbReference>
<dbReference type="HAMAP" id="MF_00183">
    <property type="entry name" value="DXP_reductoisom"/>
    <property type="match status" value="1"/>
</dbReference>
<dbReference type="InterPro" id="IPR003821">
    <property type="entry name" value="DXP_reductoisomerase"/>
</dbReference>
<dbReference type="InterPro" id="IPR013644">
    <property type="entry name" value="DXP_reductoisomerase_C"/>
</dbReference>
<dbReference type="InterPro" id="IPR013512">
    <property type="entry name" value="DXP_reductoisomerase_N"/>
</dbReference>
<dbReference type="InterPro" id="IPR026877">
    <property type="entry name" value="DXPR_C"/>
</dbReference>
<dbReference type="InterPro" id="IPR036169">
    <property type="entry name" value="DXPR_C_sf"/>
</dbReference>
<dbReference type="InterPro" id="IPR036291">
    <property type="entry name" value="NAD(P)-bd_dom_sf"/>
</dbReference>
<dbReference type="NCBIfam" id="TIGR00243">
    <property type="entry name" value="Dxr"/>
    <property type="match status" value="1"/>
</dbReference>
<dbReference type="NCBIfam" id="NF009114">
    <property type="entry name" value="PRK12464.1"/>
    <property type="match status" value="1"/>
</dbReference>
<dbReference type="PANTHER" id="PTHR30525">
    <property type="entry name" value="1-DEOXY-D-XYLULOSE 5-PHOSPHATE REDUCTOISOMERASE"/>
    <property type="match status" value="1"/>
</dbReference>
<dbReference type="PANTHER" id="PTHR30525:SF0">
    <property type="entry name" value="1-DEOXY-D-XYLULOSE 5-PHOSPHATE REDUCTOISOMERASE, CHLOROPLASTIC"/>
    <property type="match status" value="1"/>
</dbReference>
<dbReference type="Pfam" id="PF08436">
    <property type="entry name" value="DXP_redisom_C"/>
    <property type="match status" value="1"/>
</dbReference>
<dbReference type="Pfam" id="PF02670">
    <property type="entry name" value="DXP_reductoisom"/>
    <property type="match status" value="1"/>
</dbReference>
<dbReference type="Pfam" id="PF13288">
    <property type="entry name" value="DXPR_C"/>
    <property type="match status" value="1"/>
</dbReference>
<dbReference type="PIRSF" id="PIRSF006205">
    <property type="entry name" value="Dxp_reductismrs"/>
    <property type="match status" value="1"/>
</dbReference>
<dbReference type="SUPFAM" id="SSF69055">
    <property type="entry name" value="1-deoxy-D-xylulose-5-phosphate reductoisomerase, C-terminal domain"/>
    <property type="match status" value="1"/>
</dbReference>
<dbReference type="SUPFAM" id="SSF55347">
    <property type="entry name" value="Glyceraldehyde-3-phosphate dehydrogenase-like, C-terminal domain"/>
    <property type="match status" value="1"/>
</dbReference>
<dbReference type="SUPFAM" id="SSF51735">
    <property type="entry name" value="NAD(P)-binding Rossmann-fold domains"/>
    <property type="match status" value="1"/>
</dbReference>
<protein>
    <recommendedName>
        <fullName>1-deoxy-D-xylulose 5-phosphate reductoisomerase, chloroplastic</fullName>
        <shortName>1-deoxyxylulose-5-phosphate reductoisomerase</shortName>
        <shortName>DXP reductoisomerase</shortName>
        <ecNumber evidence="1">1.1.1.267</ecNumber>
    </recommendedName>
    <alternativeName>
        <fullName>2-C-methyl-D-erythritol 4-phosphate synthase</fullName>
    </alternativeName>
</protein>
<sequence>MAPTEIKTLSFLDSSKSNYNLNPLKFQGGFAFKRKDSGCTAAKRVHCSAQSQSPPPAWPGRAFPEPGRMTWEGPKPISVIGSTGSIGTQTLDIVAENPDKFRIVALAAGSNVTLLADQVKAFKPKLVSVKDESLISELKEALAGFEDMPEIIPGEQGMIEVARHPDAVTVVTGIVGCAGLKPTVAAIEAGKDIALANKETLIAGGPFVLPLAKKHNVKILPADSEHSAIFQCIQGLPEGALRRIILTASGGAFRDLPVEKLKEVKVADALKHPNWNMGKKITVDSATLFNKGLEVIEAHYLFGAEYDDIEIVIHPQSIIHSMVETQDSSVLAQLGWPDMRLPILYTLSWPERIYCSEITWPRLDLCKVDLTFKKPDNVKYPSMDLAYAAGRAGGTMTGVLSAANEKAVEMFIDEKIGYLDIFKVVELTCDKHRSEMAVSPSLEEIVHYDQWARDYAATVLKSAGLSPALV</sequence>
<proteinExistence type="evidence at transcript level"/>
<gene>
    <name type="primary">DXR</name>
</gene>